<comment type="function">
    <text evidence="1">Endonuclease that catalyzes the cleavage of RNA on the 3' side of pyrimidine nucleotides. Acts on single-stranded and double-stranded RNA (By similarity).</text>
</comment>
<comment type="catalytic activity">
    <reaction>
        <text>an [RNA] containing cytidine + H2O = an [RNA]-3'-cytidine-3'-phosphate + a 5'-hydroxy-ribonucleotide-3'-[RNA].</text>
        <dbReference type="EC" id="4.6.1.18"/>
    </reaction>
</comment>
<comment type="catalytic activity">
    <reaction>
        <text>an [RNA] containing uridine + H2O = an [RNA]-3'-uridine-3'-phosphate + a 5'-hydroxy-ribonucleotide-3'-[RNA].</text>
        <dbReference type="EC" id="4.6.1.18"/>
    </reaction>
</comment>
<comment type="subunit">
    <text evidence="1">Monomer.</text>
</comment>
<comment type="subcellular location">
    <subcellularLocation>
        <location>Secreted</location>
    </subcellularLocation>
</comment>
<comment type="similarity">
    <text evidence="3">Belongs to the pancreatic ribonuclease family.</text>
</comment>
<evidence type="ECO:0000250" key="1"/>
<evidence type="ECO:0000256" key="2">
    <source>
        <dbReference type="SAM" id="MobiDB-lite"/>
    </source>
</evidence>
<evidence type="ECO:0000305" key="3"/>
<reference key="1">
    <citation type="journal article" date="1999" name="Mol. Phylogenet. Evol.">
        <title>The phylogenetic position of 'Acomyinae' (Rodentia, Mammalia) as sister group of a Murinae + Gerbillinae clade: evidence from the nuclear ribonuclease gene.</title>
        <authorList>
            <person name="Dubois J.-Y.F."/>
            <person name="Catzeflis F.M."/>
            <person name="Beintema J.J."/>
        </authorList>
    </citation>
    <scope>NUCLEOTIDE SEQUENCE [GENOMIC DNA]</scope>
</reference>
<proteinExistence type="inferred from homology"/>
<dbReference type="EC" id="4.6.1.18"/>
<dbReference type="EMBL" id="AJ005776">
    <property type="protein sequence ID" value="CAB41484.1"/>
    <property type="molecule type" value="Genomic_DNA"/>
</dbReference>
<dbReference type="SMR" id="Q9WUX3"/>
<dbReference type="GO" id="GO:0005576">
    <property type="term" value="C:extracellular region"/>
    <property type="evidence" value="ECO:0007669"/>
    <property type="project" value="UniProtKB-SubCell"/>
</dbReference>
<dbReference type="GO" id="GO:0016829">
    <property type="term" value="F:lyase activity"/>
    <property type="evidence" value="ECO:0007669"/>
    <property type="project" value="UniProtKB-KW"/>
</dbReference>
<dbReference type="GO" id="GO:0003676">
    <property type="term" value="F:nucleic acid binding"/>
    <property type="evidence" value="ECO:0007669"/>
    <property type="project" value="InterPro"/>
</dbReference>
<dbReference type="GO" id="GO:0004522">
    <property type="term" value="F:ribonuclease A activity"/>
    <property type="evidence" value="ECO:0007669"/>
    <property type="project" value="UniProtKB-EC"/>
</dbReference>
<dbReference type="GO" id="GO:0050830">
    <property type="term" value="P:defense response to Gram-positive bacterium"/>
    <property type="evidence" value="ECO:0007669"/>
    <property type="project" value="TreeGrafter"/>
</dbReference>
<dbReference type="CDD" id="cd06265">
    <property type="entry name" value="RNase_A_canonical"/>
    <property type="match status" value="1"/>
</dbReference>
<dbReference type="FunFam" id="3.10.130.10:FF:000001">
    <property type="entry name" value="Ribonuclease pancreatic"/>
    <property type="match status" value="1"/>
</dbReference>
<dbReference type="Gene3D" id="3.10.130.10">
    <property type="entry name" value="Ribonuclease A-like domain"/>
    <property type="match status" value="1"/>
</dbReference>
<dbReference type="InterPro" id="IPR001427">
    <property type="entry name" value="RNaseA"/>
</dbReference>
<dbReference type="InterPro" id="IPR036816">
    <property type="entry name" value="RNaseA-like_dom_sf"/>
</dbReference>
<dbReference type="InterPro" id="IPR023411">
    <property type="entry name" value="RNaseA_AS"/>
</dbReference>
<dbReference type="InterPro" id="IPR023412">
    <property type="entry name" value="RNaseA_domain"/>
</dbReference>
<dbReference type="PANTHER" id="PTHR11437">
    <property type="entry name" value="RIBONUCLEASE"/>
    <property type="match status" value="1"/>
</dbReference>
<dbReference type="PANTHER" id="PTHR11437:SF24">
    <property type="entry name" value="RIBONUCLEASE PANCREATIC"/>
    <property type="match status" value="1"/>
</dbReference>
<dbReference type="Pfam" id="PF00074">
    <property type="entry name" value="RnaseA"/>
    <property type="match status" value="1"/>
</dbReference>
<dbReference type="PRINTS" id="PR00794">
    <property type="entry name" value="RIBONUCLEASE"/>
</dbReference>
<dbReference type="SMART" id="SM00092">
    <property type="entry name" value="RNAse_Pc"/>
    <property type="match status" value="1"/>
</dbReference>
<dbReference type="SUPFAM" id="SSF54076">
    <property type="entry name" value="RNase A-like"/>
    <property type="match status" value="1"/>
</dbReference>
<dbReference type="PROSITE" id="PS00127">
    <property type="entry name" value="RNASE_PANCREATIC"/>
    <property type="match status" value="1"/>
</dbReference>
<feature type="signal peptide" evidence="1">
    <location>
        <begin position="1"/>
        <end position="25"/>
    </location>
</feature>
<feature type="chain" id="PRO_0000030941" description="Ribonuclease pancreatic beta-type">
    <location>
        <begin position="26"/>
        <end position="152"/>
    </location>
</feature>
<feature type="region of interest" description="Disordered" evidence="2">
    <location>
        <begin position="31"/>
        <end position="53"/>
    </location>
</feature>
<feature type="compositionally biased region" description="Basic and acidic residues" evidence="2">
    <location>
        <begin position="31"/>
        <end position="45"/>
    </location>
</feature>
<feature type="active site" description="Proton acceptor" evidence="1">
    <location>
        <position position="40"/>
    </location>
</feature>
<feature type="active site" description="Proton donor" evidence="1">
    <location>
        <position position="147"/>
    </location>
</feature>
<feature type="binding site" evidence="1">
    <location>
        <position position="35"/>
    </location>
    <ligand>
        <name>substrate</name>
    </ligand>
</feature>
<feature type="binding site" evidence="1">
    <location>
        <position position="38"/>
    </location>
    <ligand>
        <name>substrate</name>
    </ligand>
</feature>
<feature type="binding site" evidence="1">
    <location>
        <begin position="69"/>
        <end position="73"/>
    </location>
    <ligand>
        <name>substrate</name>
    </ligand>
</feature>
<feature type="binding site" evidence="1">
    <location>
        <position position="94"/>
    </location>
    <ligand>
        <name>substrate</name>
    </ligand>
</feature>
<feature type="binding site" evidence="1">
    <location>
        <position position="113"/>
    </location>
    <ligand>
        <name>substrate</name>
    </ligand>
</feature>
<feature type="disulfide bond" evidence="1">
    <location>
        <begin position="54"/>
        <end position="112"/>
    </location>
</feature>
<feature type="disulfide bond" evidence="1">
    <location>
        <begin position="68"/>
        <end position="123"/>
    </location>
</feature>
<feature type="disulfide bond" evidence="1">
    <location>
        <begin position="86"/>
        <end position="138"/>
    </location>
</feature>
<feature type="disulfide bond" evidence="1">
    <location>
        <begin position="93"/>
        <end position="100"/>
    </location>
</feature>
<accession>Q9WUX3</accession>
<protein>
    <recommendedName>
        <fullName>Ribonuclease pancreatic beta-type</fullName>
        <ecNumber>4.6.1.18</ecNumber>
    </recommendedName>
    <alternativeName>
        <fullName>RNase 1 gamma</fullName>
    </alternativeName>
</protein>
<sequence>MGLEKSFILFSLLVLVLGWVQPSLGVESRESSADKFKRQHMDPESPSKSSPTYCNQMMKRQGMTKGSCKPVNTFVHEPLEDVQAICSQGQVTCKNGRNNCHKSSSTLHITECRLKGSSKYPNCEYTTTDSQKHIIIACEGNPLVPVHYDDTV</sequence>
<organism>
    <name type="scientific">Rattus exulans</name>
    <name type="common">Polynesian rat</name>
    <name type="synonym">Small spiny rice-field rat</name>
    <dbReference type="NCBI Taxonomy" id="34854"/>
    <lineage>
        <taxon>Eukaryota</taxon>
        <taxon>Metazoa</taxon>
        <taxon>Chordata</taxon>
        <taxon>Craniata</taxon>
        <taxon>Vertebrata</taxon>
        <taxon>Euteleostomi</taxon>
        <taxon>Mammalia</taxon>
        <taxon>Eutheria</taxon>
        <taxon>Euarchontoglires</taxon>
        <taxon>Glires</taxon>
        <taxon>Rodentia</taxon>
        <taxon>Myomorpha</taxon>
        <taxon>Muroidea</taxon>
        <taxon>Muridae</taxon>
        <taxon>Murinae</taxon>
        <taxon>Rattus</taxon>
    </lineage>
</organism>
<keyword id="KW-1015">Disulfide bond</keyword>
<keyword id="KW-0255">Endonuclease</keyword>
<keyword id="KW-0378">Hydrolase</keyword>
<keyword id="KW-0456">Lyase</keyword>
<keyword id="KW-0540">Nuclease</keyword>
<keyword id="KW-0964">Secreted</keyword>
<keyword id="KW-0732">Signal</keyword>
<name>RNS1B_RATEX</name>